<dbReference type="EC" id="1.1.1.2"/>
<dbReference type="EMBL" id="AF160799">
    <property type="protein sequence ID" value="AAF15999.1"/>
    <property type="molecule type" value="Genomic_DNA"/>
</dbReference>
<dbReference type="PDB" id="1UJM">
    <property type="method" value="X-ray"/>
    <property type="resolution" value="2.00 A"/>
    <property type="chains" value="A/B=2-343"/>
</dbReference>
<dbReference type="PDB" id="1Y1P">
    <property type="method" value="X-ray"/>
    <property type="resolution" value="1.60 A"/>
    <property type="chains" value="A/B=2-343"/>
</dbReference>
<dbReference type="PDB" id="1ZZE">
    <property type="method" value="X-ray"/>
    <property type="resolution" value="1.80 A"/>
    <property type="chains" value="A/B=2-343"/>
</dbReference>
<dbReference type="PDB" id="8JQJ">
    <property type="method" value="X-ray"/>
    <property type="resolution" value="1.40 A"/>
    <property type="chains" value="A=1-343"/>
</dbReference>
<dbReference type="PDB" id="8JQK">
    <property type="method" value="X-ray"/>
    <property type="resolution" value="1.63 A"/>
    <property type="chains" value="A/B=1-343"/>
</dbReference>
<dbReference type="PDBsum" id="1UJM"/>
<dbReference type="PDBsum" id="1Y1P"/>
<dbReference type="PDBsum" id="1ZZE"/>
<dbReference type="PDBsum" id="8JQJ"/>
<dbReference type="PDBsum" id="8JQK"/>
<dbReference type="SMR" id="Q9UUN9"/>
<dbReference type="EvolutionaryTrace" id="Q9UUN9"/>
<dbReference type="GO" id="GO:0008106">
    <property type="term" value="F:alcohol dehydrogenase (NADP+) activity"/>
    <property type="evidence" value="ECO:0000314"/>
    <property type="project" value="UniProtKB"/>
</dbReference>
<dbReference type="CDD" id="cd05193">
    <property type="entry name" value="AR_like_SDR_e"/>
    <property type="match status" value="1"/>
</dbReference>
<dbReference type="FunFam" id="3.40.50.720:FF:000426">
    <property type="entry name" value="Aldehyde reductase 2"/>
    <property type="match status" value="1"/>
</dbReference>
<dbReference type="Gene3D" id="3.40.50.720">
    <property type="entry name" value="NAD(P)-binding Rossmann-like Domain"/>
    <property type="match status" value="1"/>
</dbReference>
<dbReference type="InterPro" id="IPR001509">
    <property type="entry name" value="Epimerase_deHydtase"/>
</dbReference>
<dbReference type="InterPro" id="IPR036291">
    <property type="entry name" value="NAD(P)-bd_dom_sf"/>
</dbReference>
<dbReference type="InterPro" id="IPR050425">
    <property type="entry name" value="NAD(P)_dehydrat-like"/>
</dbReference>
<dbReference type="PANTHER" id="PTHR10366:SF562">
    <property type="entry name" value="ALDEHYDE REDUCTASE II (AFU_ORTHOLOGUE AFUA_1G11360)"/>
    <property type="match status" value="1"/>
</dbReference>
<dbReference type="PANTHER" id="PTHR10366">
    <property type="entry name" value="NAD DEPENDENT EPIMERASE/DEHYDRATASE"/>
    <property type="match status" value="1"/>
</dbReference>
<dbReference type="Pfam" id="PF01370">
    <property type="entry name" value="Epimerase"/>
    <property type="match status" value="1"/>
</dbReference>
<dbReference type="SUPFAM" id="SSF51735">
    <property type="entry name" value="NAD(P)-binding Rossmann-fold domains"/>
    <property type="match status" value="1"/>
</dbReference>
<name>ALD2_SPOSA</name>
<reference evidence="4" key="1">
    <citation type="journal article" date="1999" name="Appl. Environ. Microbiol.">
        <title>Cloning, overexpression, and mutagenesis of the Sporobolomyces salmonicolor AKU4429 gene encoding a new aldehyde reductase, which catalyzes the stereoselective reduction of ethyl 4-chloro-3-oxobutanoate to ethyl (S)-4-chloro-3-hydroxybutanoate.</title>
        <authorList>
            <person name="Kita K."/>
            <person name="Fukura T."/>
            <person name="Nakase K."/>
            <person name="Okamoto K."/>
            <person name="Yanase H."/>
            <person name="Kataoka M."/>
            <person name="Shimizu S."/>
        </authorList>
    </citation>
    <scope>NUCLEOTIDE SEQUENCE [GENOMIC DNA]</scope>
    <scope>PROTEIN SEQUENCE OF 39-54; 75-83; 153-161; 182-184 AND 336-343</scope>
    <scope>MUTAGENESIS OF GLY-19; GLY-22 AND ALA-25</scope>
    <scope>FUNCTION</scope>
    <source>
        <strain>AKU 4429</strain>
    </source>
</reference>
<reference evidence="4" key="2">
    <citation type="journal article" date="1999" name="J. Mol. Catal., B Enzym.">
        <title>Purification and characterization of new aldehyde reductases from Sporobolomyces salmonicolor AKU4429.</title>
        <authorList>
            <person name="Kita K."/>
            <person name="Nakase K."/>
            <person name="Yanase H."/>
            <person name="Kataoka M."/>
            <person name="Shimizu S."/>
        </authorList>
    </citation>
    <scope>PROTEIN SEQUENCE OF 2-25</scope>
    <scope>FUNCTION</scope>
    <scope>ACTIVITY REGULATION</scope>
    <source>
        <strain>AKU 4429</strain>
    </source>
</reference>
<protein>
    <recommendedName>
        <fullName>Aldehyde reductase 2</fullName>
        <ecNumber>1.1.1.2</ecNumber>
    </recommendedName>
    <alternativeName>
        <fullName>Aldehyde reductase II</fullName>
        <shortName>ARII</shortName>
    </alternativeName>
</protein>
<proteinExistence type="evidence at protein level"/>
<organism evidence="5">
    <name type="scientific">Sporidiobolus salmonicolor</name>
    <name type="common">Yeast-like fungus</name>
    <name type="synonym">Sporobolomyces salmonicolor</name>
    <dbReference type="NCBI Taxonomy" id="5005"/>
    <lineage>
        <taxon>Eukaryota</taxon>
        <taxon>Fungi</taxon>
        <taxon>Dikarya</taxon>
        <taxon>Basidiomycota</taxon>
        <taxon>Pucciniomycotina</taxon>
        <taxon>Microbotryomycetes</taxon>
        <taxon>Sporidiobolales</taxon>
        <taxon>Sporidiobolaceae</taxon>
        <taxon>Sporobolomyces</taxon>
    </lineage>
</organism>
<evidence type="ECO:0000250" key="1">
    <source>
        <dbReference type="UniProtKB" id="A0A059TC02"/>
    </source>
</evidence>
<evidence type="ECO:0000269" key="2">
    <source>
    </source>
</evidence>
<evidence type="ECO:0000269" key="3">
    <source ref="2"/>
</evidence>
<evidence type="ECO:0000305" key="4"/>
<evidence type="ECO:0000312" key="5">
    <source>
        <dbReference type="EMBL" id="AAF15999.1"/>
    </source>
</evidence>
<evidence type="ECO:0007829" key="6">
    <source>
        <dbReference type="PDB" id="1Y1P"/>
    </source>
</evidence>
<feature type="initiator methionine" description="Removed" evidence="3">
    <location>
        <position position="1"/>
    </location>
</feature>
<feature type="chain" id="PRO_0000215575" description="Aldehyde reductase 2">
    <location>
        <begin position="2"/>
        <end position="343"/>
    </location>
</feature>
<feature type="binding site" evidence="1">
    <location>
        <position position="177"/>
    </location>
    <ligand>
        <name>NADP(+)</name>
        <dbReference type="ChEBI" id="CHEBI:58349"/>
    </ligand>
</feature>
<feature type="mutagenesis site" description="Results in loss of substrate inhibition and of NADPH-dependent reductase activity." evidence="2">
    <original>G</original>
    <variation>A</variation>
    <location>
        <position position="19"/>
    </location>
</feature>
<feature type="mutagenesis site" description="Results in loss of substrate inhibition and of NADPH-dependent reductase activity." evidence="2">
    <original>G</original>
    <variation>A</variation>
    <location>
        <position position="22"/>
    </location>
</feature>
<feature type="mutagenesis site" description="Only active when NADPH is replaced by NADH." evidence="2">
    <original>A</original>
    <variation>G</variation>
    <location>
        <position position="25"/>
    </location>
</feature>
<feature type="strand" evidence="6">
    <location>
        <begin position="14"/>
        <end position="18"/>
    </location>
</feature>
<feature type="turn" evidence="6">
    <location>
        <begin position="19"/>
        <end position="21"/>
    </location>
</feature>
<feature type="helix" evidence="6">
    <location>
        <begin position="23"/>
        <end position="34"/>
    </location>
</feature>
<feature type="strand" evidence="6">
    <location>
        <begin position="38"/>
        <end position="45"/>
    </location>
</feature>
<feature type="helix" evidence="6">
    <location>
        <begin position="46"/>
        <end position="59"/>
    </location>
</feature>
<feature type="turn" evidence="6">
    <location>
        <begin position="61"/>
        <end position="63"/>
    </location>
</feature>
<feature type="strand" evidence="6">
    <location>
        <begin position="64"/>
        <end position="68"/>
    </location>
</feature>
<feature type="turn" evidence="6">
    <location>
        <begin position="75"/>
        <end position="84"/>
    </location>
</feature>
<feature type="strand" evidence="6">
    <location>
        <begin position="86"/>
        <end position="90"/>
    </location>
</feature>
<feature type="helix" evidence="6">
    <location>
        <begin position="101"/>
        <end position="120"/>
    </location>
</feature>
<feature type="strand" evidence="6">
    <location>
        <begin position="127"/>
        <end position="131"/>
    </location>
</feature>
<feature type="helix" evidence="6">
    <location>
        <begin position="134"/>
        <end position="136"/>
    </location>
</feature>
<feature type="helix" evidence="6">
    <location>
        <begin position="156"/>
        <end position="164"/>
    </location>
</feature>
<feature type="helix" evidence="6">
    <location>
        <begin position="172"/>
        <end position="195"/>
    </location>
</feature>
<feature type="strand" evidence="6">
    <location>
        <begin position="198"/>
        <end position="210"/>
    </location>
</feature>
<feature type="turn" evidence="6">
    <location>
        <begin position="216"/>
        <end position="218"/>
    </location>
</feature>
<feature type="helix" evidence="6">
    <location>
        <begin position="222"/>
        <end position="231"/>
    </location>
</feature>
<feature type="helix" evidence="6">
    <location>
        <begin position="237"/>
        <end position="240"/>
    </location>
</feature>
<feature type="strand" evidence="6">
    <location>
        <begin position="244"/>
        <end position="249"/>
    </location>
</feature>
<feature type="helix" evidence="6">
    <location>
        <begin position="250"/>
        <end position="262"/>
    </location>
</feature>
<feature type="strand" evidence="6">
    <location>
        <begin position="270"/>
        <end position="273"/>
    </location>
</feature>
<feature type="strand" evidence="6">
    <location>
        <begin position="276"/>
        <end position="278"/>
    </location>
</feature>
<feature type="helix" evidence="6">
    <location>
        <begin position="280"/>
        <end position="290"/>
    </location>
</feature>
<feature type="helix" evidence="6">
    <location>
        <begin position="313"/>
        <end position="321"/>
    </location>
</feature>
<feature type="helix" evidence="6">
    <location>
        <begin position="330"/>
        <end position="338"/>
    </location>
</feature>
<keyword id="KW-0002">3D-structure</keyword>
<keyword id="KW-0903">Direct protein sequencing</keyword>
<keyword id="KW-0521">NADP</keyword>
<keyword id="KW-0560">Oxidoreductase</keyword>
<sequence>MAKIDNAVLPEGSLVLVTGANGFVASHVVEQLLEHGYKVRGTARSASKLANLQKRWDAKYPGRFETAVVEDMLKQGAYDEVIKGAAGVAHIASVVSFSNKYDEVVTPAIGGTLNALRAAAATPSVKRFVLTSSTVSALIPKPNVEGIYLDEKSWNLESIDKAKTLPESDPQKSLWVYAASKTEAELAAWKFMDENKPHFTLNAVLPNYTIGTIFDPETQSGSTSGWMMSLFNGEVSPALALMPPQYYVSAVDIGLLHLGCLVLPQIERRRVYGTAGTFDWNTVLATFRKLYPSKTFPADFPDQGQDLSKFDTAPSLEILKSLGRPGWRSIEESIKDLVGSETA</sequence>
<accession>Q9UUN9</accession>
<comment type="function">
    <text evidence="2 3">Catalyzes the asymmetric reduction of o-substituted aliphatic and aromatic aldehydes and ketones to an S-enantiomer. Reduces ethyl 4-chloro-3-oxobutanoate to ethyl (S)-4-chloro-3-hydroxybutanoate.</text>
</comment>
<comment type="catalytic activity">
    <reaction evidence="2 3">
        <text>a primary alcohol + NADP(+) = an aldehyde + NADPH + H(+)</text>
        <dbReference type="Rhea" id="RHEA:15937"/>
        <dbReference type="ChEBI" id="CHEBI:15378"/>
        <dbReference type="ChEBI" id="CHEBI:15734"/>
        <dbReference type="ChEBI" id="CHEBI:17478"/>
        <dbReference type="ChEBI" id="CHEBI:57783"/>
        <dbReference type="ChEBI" id="CHEBI:58349"/>
        <dbReference type="EC" id="1.1.1.2"/>
    </reaction>
</comment>
<comment type="activity regulation">
    <text evidence="3">Inhibited by quercetin and diphenylhydantoin.</text>
</comment>
<comment type="biophysicochemical properties">
    <phDependence>
        <text>Optimum pH is 5.5.</text>
    </phDependence>
    <temperatureDependence>
        <text>Optimum temperature is 40 degrees Celsius.</text>
    </temperatureDependence>
</comment>
<comment type="subunit">
    <text evidence="3">Monomer.</text>
</comment>
<comment type="similarity">
    <text evidence="4">Belongs to the NAD(P)-dependent epimerase/dehydratase family. Dihydroflavonol-4-reductase subfamily.</text>
</comment>